<feature type="chain" id="PRO_0000363961" description="Histone-lysine N-methyltransferase PRDM9">
    <location>
        <begin position="1"/>
        <end position="796"/>
    </location>
</feature>
<feature type="domain" description="KRAB-related" evidence="4">
    <location>
        <begin position="27"/>
        <end position="90"/>
    </location>
</feature>
<feature type="domain" description="SET" evidence="5">
    <location>
        <begin position="248"/>
        <end position="362"/>
    </location>
</feature>
<feature type="zinc finger region" description="C2H2-type 1" evidence="3">
    <location>
        <begin position="392"/>
        <end position="415"/>
    </location>
</feature>
<feature type="zinc finger region" description="C2H2-type 2; degenerate" evidence="3">
    <location>
        <begin position="522"/>
        <end position="540"/>
    </location>
</feature>
<feature type="zinc finger region" description="C2H2-type 3" evidence="3">
    <location>
        <begin position="546"/>
        <end position="568"/>
    </location>
</feature>
<feature type="zinc finger region" description="C2H2-type 4" evidence="3">
    <location>
        <begin position="574"/>
        <end position="596"/>
    </location>
</feature>
<feature type="zinc finger region" description="C2H2-type 5" evidence="3">
    <location>
        <begin position="602"/>
        <end position="624"/>
    </location>
</feature>
<feature type="zinc finger region" description="C2H2-type 6" evidence="3">
    <location>
        <begin position="630"/>
        <end position="652"/>
    </location>
</feature>
<feature type="zinc finger region" description="C2H2-type 7" evidence="3">
    <location>
        <begin position="658"/>
        <end position="680"/>
    </location>
</feature>
<feature type="zinc finger region" description="C2H2-type 8" evidence="3">
    <location>
        <begin position="686"/>
        <end position="708"/>
    </location>
</feature>
<feature type="zinc finger region" description="C2H2-type 9" evidence="3">
    <location>
        <begin position="714"/>
        <end position="736"/>
    </location>
</feature>
<feature type="zinc finger region" description="C2H2-type 10" evidence="3">
    <location>
        <begin position="742"/>
        <end position="764"/>
    </location>
</feature>
<feature type="zinc finger region" description="C2H2-type 11" evidence="3">
    <location>
        <begin position="770"/>
        <end position="792"/>
    </location>
</feature>
<feature type="region of interest" description="Disordered" evidence="6">
    <location>
        <begin position="1"/>
        <end position="23"/>
    </location>
</feature>
<feature type="region of interest" description="Disordered" evidence="6">
    <location>
        <begin position="149"/>
        <end position="172"/>
    </location>
</feature>
<feature type="region of interest" description="Disordered" evidence="6">
    <location>
        <begin position="443"/>
        <end position="497"/>
    </location>
</feature>
<feature type="compositionally biased region" description="Basic and acidic residues" evidence="6">
    <location>
        <begin position="443"/>
        <end position="457"/>
    </location>
</feature>
<feature type="compositionally biased region" description="Basic residues" evidence="6">
    <location>
        <begin position="458"/>
        <end position="468"/>
    </location>
</feature>
<feature type="compositionally biased region" description="Polar residues" evidence="6">
    <location>
        <begin position="469"/>
        <end position="480"/>
    </location>
</feature>
<feature type="compositionally biased region" description="Basic and acidic residues" evidence="6">
    <location>
        <begin position="481"/>
        <end position="497"/>
    </location>
</feature>
<feature type="binding site" evidence="1">
    <location>
        <position position="209"/>
    </location>
    <ligand>
        <name>Zn(2+)</name>
        <dbReference type="ChEBI" id="CHEBI:29105"/>
        <label>1</label>
    </ligand>
</feature>
<feature type="binding site" evidence="1">
    <location>
        <position position="212"/>
    </location>
    <ligand>
        <name>Zn(2+)</name>
        <dbReference type="ChEBI" id="CHEBI:29105"/>
        <label>1</label>
    </ligand>
</feature>
<feature type="binding site" evidence="1">
    <location>
        <position position="220"/>
    </location>
    <ligand>
        <name>Zn(2+)</name>
        <dbReference type="ChEBI" id="CHEBI:29105"/>
        <label>1</label>
    </ligand>
</feature>
<feature type="binding site" evidence="1">
    <location>
        <position position="223"/>
    </location>
    <ligand>
        <name>Zn(2+)</name>
        <dbReference type="ChEBI" id="CHEBI:29105"/>
        <label>1</label>
    </ligand>
</feature>
<feature type="binding site" evidence="1">
    <location>
        <begin position="260"/>
        <end position="262"/>
    </location>
    <ligand>
        <name>S-adenosyl-L-methionine</name>
        <dbReference type="ChEBI" id="CHEBI:59789"/>
    </ligand>
</feature>
<feature type="binding site" evidence="1">
    <location>
        <begin position="292"/>
        <end position="298"/>
    </location>
    <ligand>
        <name>substrate</name>
    </ligand>
</feature>
<feature type="binding site" evidence="1">
    <location>
        <position position="295"/>
    </location>
    <ligand>
        <name>S-adenosyl-L-methionine</name>
        <dbReference type="ChEBI" id="CHEBI:59789"/>
    </ligand>
</feature>
<feature type="binding site" evidence="1">
    <location>
        <begin position="324"/>
        <end position="325"/>
    </location>
    <ligand>
        <name>S-adenosyl-L-methionine</name>
        <dbReference type="ChEBI" id="CHEBI:59789"/>
    </ligand>
</feature>
<feature type="binding site" evidence="1">
    <location>
        <position position="361"/>
    </location>
    <ligand>
        <name>substrate</name>
    </ligand>
</feature>
<feature type="binding site" evidence="2">
    <location>
        <position position="394"/>
    </location>
    <ligand>
        <name>Zn(2+)</name>
        <dbReference type="ChEBI" id="CHEBI:29105"/>
        <label>2</label>
    </ligand>
</feature>
<feature type="binding site" evidence="2">
    <location>
        <position position="397"/>
    </location>
    <ligand>
        <name>Zn(2+)</name>
        <dbReference type="ChEBI" id="CHEBI:29105"/>
        <label>2</label>
    </ligand>
</feature>
<feature type="binding site" evidence="2">
    <location>
        <position position="410"/>
    </location>
    <ligand>
        <name>Zn(2+)</name>
        <dbReference type="ChEBI" id="CHEBI:29105"/>
        <label>2</label>
    </ligand>
</feature>
<feature type="binding site" evidence="2">
    <location>
        <position position="415"/>
    </location>
    <ligand>
        <name>Zn(2+)</name>
        <dbReference type="ChEBI" id="CHEBI:29105"/>
        <label>2</label>
    </ligand>
</feature>
<feature type="binding site" evidence="2">
    <location>
        <position position="716"/>
    </location>
    <ligand>
        <name>Zn(2+)</name>
        <dbReference type="ChEBI" id="CHEBI:29105"/>
        <label>3</label>
    </ligand>
</feature>
<feature type="binding site" evidence="2">
    <location>
        <position position="719"/>
    </location>
    <ligand>
        <name>Zn(2+)</name>
        <dbReference type="ChEBI" id="CHEBI:29105"/>
        <label>3</label>
    </ligand>
</feature>
<feature type="binding site" evidence="2">
    <location>
        <position position="732"/>
    </location>
    <ligand>
        <name>Zn(2+)</name>
        <dbReference type="ChEBI" id="CHEBI:29105"/>
        <label>3</label>
    </ligand>
</feature>
<feature type="binding site" evidence="2">
    <location>
        <position position="736"/>
    </location>
    <ligand>
        <name>Zn(2+)</name>
        <dbReference type="ChEBI" id="CHEBI:29105"/>
        <label>3</label>
    </ligand>
</feature>
<feature type="binding site" evidence="2">
    <location>
        <position position="744"/>
    </location>
    <ligand>
        <name>Zn(2+)</name>
        <dbReference type="ChEBI" id="CHEBI:29105"/>
        <label>4</label>
    </ligand>
</feature>
<feature type="binding site" evidence="2">
    <location>
        <position position="747"/>
    </location>
    <ligand>
        <name>Zn(2+)</name>
        <dbReference type="ChEBI" id="CHEBI:29105"/>
        <label>4</label>
    </ligand>
</feature>
<feature type="binding site" evidence="2">
    <location>
        <position position="760"/>
    </location>
    <ligand>
        <name>Zn(2+)</name>
        <dbReference type="ChEBI" id="CHEBI:29105"/>
        <label>4</label>
    </ligand>
</feature>
<feature type="binding site" evidence="2">
    <location>
        <position position="764"/>
    </location>
    <ligand>
        <name>Zn(2+)</name>
        <dbReference type="ChEBI" id="CHEBI:29105"/>
        <label>4</label>
    </ligand>
</feature>
<feature type="binding site" evidence="2">
    <location>
        <position position="772"/>
    </location>
    <ligand>
        <name>Zn(2+)</name>
        <dbReference type="ChEBI" id="CHEBI:29105"/>
        <label>5</label>
    </ligand>
</feature>
<feature type="binding site" evidence="2">
    <location>
        <position position="775"/>
    </location>
    <ligand>
        <name>Zn(2+)</name>
        <dbReference type="ChEBI" id="CHEBI:29105"/>
        <label>5</label>
    </ligand>
</feature>
<feature type="binding site" evidence="2">
    <location>
        <position position="788"/>
    </location>
    <ligand>
        <name>Zn(2+)</name>
        <dbReference type="ChEBI" id="CHEBI:29105"/>
        <label>5</label>
    </ligand>
</feature>
<feature type="binding site" evidence="2">
    <location>
        <position position="792"/>
    </location>
    <ligand>
        <name>Zn(2+)</name>
        <dbReference type="ChEBI" id="CHEBI:29105"/>
        <label>5</label>
    </ligand>
</feature>
<feature type="modified residue" description="N6,N6,N6-trimethyllysine; alternate" evidence="1">
    <location>
        <position position="372"/>
    </location>
</feature>
<feature type="modified residue" description="N6-methyllysine; alternate" evidence="1">
    <location>
        <position position="372"/>
    </location>
</feature>
<feature type="modified residue" description="N6-methyllysine" evidence="1">
    <location>
        <position position="376"/>
    </location>
</feature>
<feature type="modified residue" description="N6-methyllysine" evidence="1">
    <location>
        <position position="378"/>
    </location>
</feature>
<feature type="splice variant" id="VSP_036379" description="In isoform 2." evidence="7">
    <location>
        <begin position="1"/>
        <end position="125"/>
    </location>
</feature>
<feature type="splice variant" id="VSP_036380" description="In isoform 2." evidence="7">
    <original>ELRTEIHPCFLCSLAFSSQKFLT</original>
    <variation>GGYHYDSLKEKEKMDFSLRIFIF</variation>
    <location>
        <begin position="386"/>
        <end position="408"/>
    </location>
</feature>
<feature type="splice variant" id="VSP_036381" description="In isoform 2." evidence="7">
    <location>
        <begin position="409"/>
        <end position="796"/>
    </location>
</feature>
<accession>P0C6Y7</accession>
<gene>
    <name evidence="8" type="primary">Prdm9</name>
</gene>
<reference key="1">
    <citation type="submission" date="2005-08" db="EMBL/GenBank/DDBJ databases">
        <authorList>
            <person name="Mural R.J."/>
            <person name="Adams M.D."/>
            <person name="Myers E.W."/>
            <person name="Smith H.O."/>
            <person name="Venter J.C."/>
        </authorList>
    </citation>
    <scope>NUCLEOTIDE SEQUENCE [LARGE SCALE GENOMIC DNA]</scope>
</reference>
<protein>
    <recommendedName>
        <fullName evidence="7">Histone-lysine N-methyltransferase PRDM9</fullName>
    </recommendedName>
    <alternativeName>
        <fullName>PR domain zinc finger protein 9</fullName>
    </alternativeName>
    <alternativeName>
        <fullName>PR domain-containing protein 9</fullName>
    </alternativeName>
    <alternativeName>
        <fullName evidence="1">Protein-lysine N-methyltransferase PRDM9</fullName>
        <ecNumber evidence="1">2.1.1.-</ecNumber>
    </alternativeName>
    <alternativeName>
        <fullName evidence="1">[histone H3]-lysine36 N-trimethyltransferase PRDM9</fullName>
        <ecNumber evidence="1">2.1.1.359</ecNumber>
    </alternativeName>
    <alternativeName>
        <fullName evidence="1">[histone H3]-lysine4 N-trimethyltransferase PRDM9</fullName>
        <ecNumber evidence="1">2.1.1.354</ecNumber>
    </alternativeName>
    <alternativeName>
        <fullName evidence="1">[histone H3]-lysine9 N-trimethyltransferase PRDM9</fullName>
        <ecNumber evidence="1">2.1.1.355</ecNumber>
    </alternativeName>
    <alternativeName>
        <fullName evidence="1">[histone H4]-N-methyl-L-lysine20 N-methyltransferase PRDM9</fullName>
        <ecNumber evidence="1">2.1.1.362</ecNumber>
    </alternativeName>
    <alternativeName>
        <fullName evidence="1">[histone H4]-lysine20 N-methyltransferase PRDM9</fullName>
        <ecNumber evidence="1">2.1.1.361</ecNumber>
    </alternativeName>
</protein>
<comment type="function">
    <text evidence="1">Histone methyltransferase that sequentially mono-, di-, and tri-methylates both 'Lys-4' (H3K4) and 'Lys-36' (H3K36) of histone H3 to produce respectively trimethylated 'Lys-4' (H3K4me3) and trimethylated 'Lys-36' (H3K36me3) histone H3 and plays a key role in meiotic prophase by determining hotspot localization thereby promoting meiotic recombination. Can also methylate all four core histones with H3 being the best substrate and the most highly modified. Is also able, on one hand, to mono and di-methylate H4K20 and on other hand to trimethylate H3K9 with the di-methylated H3K9 as the best substrate. During meiotic prophase, binds specific DNA sequences through its zinc finger domains thereby determining hotspot localization where it promotes local H3K4me3 and H3K36me3 enrichment on the same nucleosomes through its histone methyltransferase activity. Thereby promotes double-stranded breaks (DSB) formation, at this subset of PRDM9-binding sites, that initiates meiotic recombination for the proper meiotic progression. During meiotic progression hotspot-bound PRDM9 interacts with several complexes; in early leptonema binds CDYL and EHMT2 followed by EWSR1 and CXXC1 by the end of leptonema. EWSR1 joins PRDM9 with the chromosomal axis through REC8. In this way, controls the DSB repair pathway, pairing of homologous chromosomes and sex body formation. Moreover plays a central role in the transcriptional activation of genes during early meiotic prophase thanks to H3K4me3 and H3K36me3 enrichment that represents a specific tag for epigenetic transcriptional activation. In addition performs automethylation. Acetylation and phosphorylation of histone H3 attenuate or prevent histone H3 methylation.</text>
</comment>
<comment type="catalytic activity">
    <reaction evidence="1">
        <text>L-lysyl-[protein] + S-adenosyl-L-methionine = N(6)-methyl-L-lysyl-[protein] + S-adenosyl-L-homocysteine + H(+)</text>
        <dbReference type="Rhea" id="RHEA:51736"/>
        <dbReference type="Rhea" id="RHEA-COMP:9752"/>
        <dbReference type="Rhea" id="RHEA-COMP:13053"/>
        <dbReference type="ChEBI" id="CHEBI:15378"/>
        <dbReference type="ChEBI" id="CHEBI:29969"/>
        <dbReference type="ChEBI" id="CHEBI:57856"/>
        <dbReference type="ChEBI" id="CHEBI:59789"/>
        <dbReference type="ChEBI" id="CHEBI:61929"/>
    </reaction>
    <physiologicalReaction direction="left-to-right" evidence="1">
        <dbReference type="Rhea" id="RHEA:51737"/>
    </physiologicalReaction>
</comment>
<comment type="catalytic activity">
    <reaction evidence="1">
        <text>N(6)-methyl-L-lysyl-[protein] + S-adenosyl-L-methionine = N(6),N(6)-dimethyl-L-lysyl-[protein] + S-adenosyl-L-homocysteine + H(+)</text>
        <dbReference type="Rhea" id="RHEA:54196"/>
        <dbReference type="Rhea" id="RHEA-COMP:13053"/>
        <dbReference type="Rhea" id="RHEA-COMP:13827"/>
        <dbReference type="ChEBI" id="CHEBI:15378"/>
        <dbReference type="ChEBI" id="CHEBI:57856"/>
        <dbReference type="ChEBI" id="CHEBI:59789"/>
        <dbReference type="ChEBI" id="CHEBI:61929"/>
        <dbReference type="ChEBI" id="CHEBI:61976"/>
    </reaction>
    <physiologicalReaction direction="left-to-right" evidence="1">
        <dbReference type="Rhea" id="RHEA:54197"/>
    </physiologicalReaction>
</comment>
<comment type="catalytic activity">
    <reaction evidence="2">
        <text>L-lysyl(4)-[histone H3] + 3 S-adenosyl-L-methionine = N(6),N(6),N(6)-trimethyl-L-lysyl(4)-[histone H3] + 3 S-adenosyl-L-homocysteine + 3 H(+)</text>
        <dbReference type="Rhea" id="RHEA:60260"/>
        <dbReference type="Rhea" id="RHEA-COMP:15537"/>
        <dbReference type="Rhea" id="RHEA-COMP:15547"/>
        <dbReference type="ChEBI" id="CHEBI:15378"/>
        <dbReference type="ChEBI" id="CHEBI:29969"/>
        <dbReference type="ChEBI" id="CHEBI:57856"/>
        <dbReference type="ChEBI" id="CHEBI:59789"/>
        <dbReference type="ChEBI" id="CHEBI:61961"/>
        <dbReference type="EC" id="2.1.1.354"/>
    </reaction>
    <physiologicalReaction direction="left-to-right" evidence="2">
        <dbReference type="Rhea" id="RHEA:60261"/>
    </physiologicalReaction>
</comment>
<comment type="catalytic activity">
    <reaction evidence="2">
        <text>L-lysyl(36)-[histone H3] + 3 S-adenosyl-L-methionine = N(6),N(6),N(6)-trimethyl-L-lysyl(36)-[histone H3] + 3 S-adenosyl-L-homocysteine + 3 H(+)</text>
        <dbReference type="Rhea" id="RHEA:60324"/>
        <dbReference type="Rhea" id="RHEA-COMP:9785"/>
        <dbReference type="Rhea" id="RHEA-COMP:15536"/>
        <dbReference type="ChEBI" id="CHEBI:15378"/>
        <dbReference type="ChEBI" id="CHEBI:29969"/>
        <dbReference type="ChEBI" id="CHEBI:57856"/>
        <dbReference type="ChEBI" id="CHEBI:59789"/>
        <dbReference type="ChEBI" id="CHEBI:61961"/>
        <dbReference type="EC" id="2.1.1.359"/>
    </reaction>
    <physiologicalReaction direction="left-to-right" evidence="2">
        <dbReference type="Rhea" id="RHEA:60325"/>
    </physiologicalReaction>
</comment>
<comment type="catalytic activity">
    <reaction evidence="1">
        <text>L-lysyl(9)-[histone H3] + 3 S-adenosyl-L-methionine = N(6),N(6),N(6)-trimethyl-L-lysyl(9)-[histone H3] + 3 S-adenosyl-L-homocysteine + 3 H(+)</text>
        <dbReference type="Rhea" id="RHEA:60276"/>
        <dbReference type="Rhea" id="RHEA-COMP:15538"/>
        <dbReference type="Rhea" id="RHEA-COMP:15546"/>
        <dbReference type="ChEBI" id="CHEBI:15378"/>
        <dbReference type="ChEBI" id="CHEBI:29969"/>
        <dbReference type="ChEBI" id="CHEBI:57856"/>
        <dbReference type="ChEBI" id="CHEBI:59789"/>
        <dbReference type="ChEBI" id="CHEBI:61961"/>
        <dbReference type="EC" id="2.1.1.355"/>
    </reaction>
    <physiologicalReaction direction="left-to-right" evidence="1">
        <dbReference type="Rhea" id="RHEA:60277"/>
    </physiologicalReaction>
</comment>
<comment type="catalytic activity">
    <reaction evidence="1">
        <text>L-lysyl(20)-[histone H4] + S-adenosyl-L-methionine = N(6)-methyl-L-lysyl(20)-[histone H4] + S-adenosyl-L-homocysteine + H(+)</text>
        <dbReference type="Rhea" id="RHEA:60344"/>
        <dbReference type="Rhea" id="RHEA-COMP:15554"/>
        <dbReference type="Rhea" id="RHEA-COMP:15555"/>
        <dbReference type="ChEBI" id="CHEBI:15378"/>
        <dbReference type="ChEBI" id="CHEBI:29969"/>
        <dbReference type="ChEBI" id="CHEBI:57856"/>
        <dbReference type="ChEBI" id="CHEBI:59789"/>
        <dbReference type="ChEBI" id="CHEBI:61929"/>
        <dbReference type="EC" id="2.1.1.361"/>
    </reaction>
    <physiologicalReaction direction="left-to-right" evidence="1">
        <dbReference type="Rhea" id="RHEA:60345"/>
    </physiologicalReaction>
</comment>
<comment type="catalytic activity">
    <reaction evidence="1">
        <text>N(6)-methyl-L-lysyl(20)-[histone H4] + S-adenosyl-L-methionine = N(6),N(6)-dimethyl-L-lysyl(20)-[histone H4] + S-adenosyl-L-homocysteine + H(+)</text>
        <dbReference type="Rhea" id="RHEA:60348"/>
        <dbReference type="Rhea" id="RHEA-COMP:15555"/>
        <dbReference type="Rhea" id="RHEA-COMP:15556"/>
        <dbReference type="ChEBI" id="CHEBI:15378"/>
        <dbReference type="ChEBI" id="CHEBI:57856"/>
        <dbReference type="ChEBI" id="CHEBI:59789"/>
        <dbReference type="ChEBI" id="CHEBI:61929"/>
        <dbReference type="ChEBI" id="CHEBI:61976"/>
        <dbReference type="EC" id="2.1.1.362"/>
    </reaction>
    <physiologicalReaction direction="left-to-right" evidence="1">
        <dbReference type="Rhea" id="RHEA:60349"/>
    </physiologicalReaction>
</comment>
<comment type="subunit">
    <text evidence="1">Homodimer. Interacts with EHMT2 and CDYL; interaction only takes place when PRDM9 is bound to hotspot DNA. Interacts with CXXC1; this interaction does not link PRDM9-activated recombination hotspot sites with DSB machinery and is not required for the hotspot recognition pathway. Forms a complex with EWSR1, REC8, SYCP3 and SYCP1; complex formation is dependent of phosphorylated form of REC8 and requires PRDM9 bound to hotspot DNA; EWSR1 joins PRDM9 with the chromosomal axis through REC8.</text>
</comment>
<comment type="subcellular location">
    <subcellularLocation>
        <location evidence="1">Nucleus</location>
    </subcellularLocation>
    <subcellularLocation>
        <location evidence="1">Chromosome</location>
    </subcellularLocation>
    <text evidence="1">Localizes in nuclei of pre-leptotene, leptotene, and early to mid-zygotene spermatocytes.</text>
</comment>
<comment type="alternative products">
    <event type="alternative splicing"/>
    <isoform>
        <id>P0C6Y7-1</id>
        <name>1</name>
        <sequence type="displayed"/>
    </isoform>
    <isoform>
        <id>P0C6Y7-2</id>
        <name>2</name>
        <sequence type="described" ref="VSP_036379 VSP_036380 VSP_036381"/>
    </isoform>
</comment>
<comment type="domain">
    <text evidence="1">The C2H2-type zinc fingers determine the hotspot localization through its binding to specific DNA sequences. Variations in their sequence affect affinity towards DNA-binding motif.</text>
</comment>
<comment type="PTM">
    <text evidence="1">Mono-methylated; automethylated. Tri-methylated; automethylated. Mono-methylation is predominant; automethylation is lower and slower than H3 peptide methylation and is in a highest S-adenosyl-L-methionine concentration-dependent. There are two major sites for automethylation at Lys-372 and Lys-378. Lysines can be simultaneously methylated, such as Lys-372(me3)/Lys-376(me1), Lys-372(me1)/Lys-378(me1) and Lys-372(me1)/Lys-376(me1)/Lys-378(me1). Automethylation is an intramolecular (cis) process.</text>
</comment>
<comment type="similarity">
    <text evidence="5">Belongs to the class V-like SAM-binding methyltransferase superfamily.</text>
</comment>
<evidence type="ECO:0000250" key="1">
    <source>
        <dbReference type="UniProtKB" id="Q96EQ9"/>
    </source>
</evidence>
<evidence type="ECO:0000250" key="2">
    <source>
        <dbReference type="UniProtKB" id="Q9NQV7"/>
    </source>
</evidence>
<evidence type="ECO:0000255" key="3">
    <source>
        <dbReference type="PROSITE-ProRule" id="PRU00042"/>
    </source>
</evidence>
<evidence type="ECO:0000255" key="4">
    <source>
        <dbReference type="PROSITE-ProRule" id="PRU00120"/>
    </source>
</evidence>
<evidence type="ECO:0000255" key="5">
    <source>
        <dbReference type="PROSITE-ProRule" id="PRU00190"/>
    </source>
</evidence>
<evidence type="ECO:0000256" key="6">
    <source>
        <dbReference type="SAM" id="MobiDB-lite"/>
    </source>
</evidence>
<evidence type="ECO:0000305" key="7"/>
<evidence type="ECO:0000312" key="8">
    <source>
        <dbReference type="RGD" id="1305247"/>
    </source>
</evidence>
<organism>
    <name type="scientific">Rattus norvegicus</name>
    <name type="common">Rat</name>
    <dbReference type="NCBI Taxonomy" id="10116"/>
    <lineage>
        <taxon>Eukaryota</taxon>
        <taxon>Metazoa</taxon>
        <taxon>Chordata</taxon>
        <taxon>Craniata</taxon>
        <taxon>Vertebrata</taxon>
        <taxon>Euteleostomi</taxon>
        <taxon>Mammalia</taxon>
        <taxon>Eutheria</taxon>
        <taxon>Euarchontoglires</taxon>
        <taxon>Glires</taxon>
        <taxon>Rodentia</taxon>
        <taxon>Myomorpha</taxon>
        <taxon>Muroidea</taxon>
        <taxon>Muridae</taxon>
        <taxon>Murinae</taxon>
        <taxon>Rattus</taxon>
    </lineage>
</organism>
<dbReference type="EC" id="2.1.1.-" evidence="1"/>
<dbReference type="EC" id="2.1.1.359" evidence="1"/>
<dbReference type="EC" id="2.1.1.354" evidence="1"/>
<dbReference type="EC" id="2.1.1.355" evidence="1"/>
<dbReference type="EC" id="2.1.1.362" evidence="1"/>
<dbReference type="EC" id="2.1.1.361" evidence="1"/>
<dbReference type="EMBL" id="CH474033">
    <property type="protein sequence ID" value="EDL99813.1"/>
    <property type="molecule type" value="Genomic_DNA"/>
</dbReference>
<dbReference type="RefSeq" id="NP_001102373.2">
    <molecule id="P0C6Y7-1"/>
    <property type="nucleotide sequence ID" value="NM_001108903.2"/>
</dbReference>
<dbReference type="SMR" id="P0C6Y7"/>
<dbReference type="FunCoup" id="P0C6Y7">
    <property type="interactions" value="48"/>
</dbReference>
<dbReference type="STRING" id="10116.ENSRNOP00000060531"/>
<dbReference type="PhosphoSitePlus" id="P0C6Y7"/>
<dbReference type="PaxDb" id="10116-ENSRNOP00000060531"/>
<dbReference type="Ensembl" id="ENSRNOT00000066370.4">
    <molecule id="P0C6Y7-1"/>
    <property type="protein sequence ID" value="ENSRNOP00000060531.1"/>
    <property type="gene ID" value="ENSRNOG00000021493.7"/>
</dbReference>
<dbReference type="GeneID" id="365155"/>
<dbReference type="KEGG" id="rno:365155"/>
<dbReference type="UCSC" id="RGD:1305247">
    <molecule id="P0C6Y7-1"/>
    <property type="organism name" value="rat"/>
</dbReference>
<dbReference type="AGR" id="RGD:1305247"/>
<dbReference type="CTD" id="56979"/>
<dbReference type="RGD" id="1305247">
    <property type="gene designation" value="Prdm9"/>
</dbReference>
<dbReference type="eggNOG" id="KOG1721">
    <property type="taxonomic scope" value="Eukaryota"/>
</dbReference>
<dbReference type="eggNOG" id="KOG2461">
    <property type="taxonomic scope" value="Eukaryota"/>
</dbReference>
<dbReference type="GeneTree" id="ENSGT00940000158211"/>
<dbReference type="HOGENOM" id="CLU_002678_32_0_1"/>
<dbReference type="InParanoid" id="P0C6Y7"/>
<dbReference type="OMA" id="KRTWQRE"/>
<dbReference type="OrthoDB" id="49027at9989"/>
<dbReference type="PhylomeDB" id="P0C6Y7"/>
<dbReference type="TreeFam" id="TF338096"/>
<dbReference type="Reactome" id="R-RNO-3214841">
    <property type="pathway name" value="PKMTs methylate histone lysines"/>
</dbReference>
<dbReference type="PRO" id="PR:P0C6Y7"/>
<dbReference type="Proteomes" id="UP000002494">
    <property type="component" value="Chromosome 1"/>
</dbReference>
<dbReference type="Proteomes" id="UP000234681">
    <property type="component" value="Chromosome 1"/>
</dbReference>
<dbReference type="Bgee" id="ENSRNOG00000021493">
    <property type="expression patterns" value="Expressed in liver and 19 other cell types or tissues"/>
</dbReference>
<dbReference type="GO" id="GO:0000785">
    <property type="term" value="C:chromatin"/>
    <property type="evidence" value="ECO:0000266"/>
    <property type="project" value="RGD"/>
</dbReference>
<dbReference type="GO" id="GO:0005634">
    <property type="term" value="C:nucleus"/>
    <property type="evidence" value="ECO:0000250"/>
    <property type="project" value="UniProtKB"/>
</dbReference>
<dbReference type="GO" id="GO:0046975">
    <property type="term" value="F:histone H3K36 methyltransferase activity"/>
    <property type="evidence" value="ECO:0000250"/>
    <property type="project" value="UniProtKB"/>
</dbReference>
<dbReference type="GO" id="GO:0140955">
    <property type="term" value="F:histone H3K36 trimethyltransferase activity"/>
    <property type="evidence" value="ECO:0007669"/>
    <property type="project" value="UniProtKB-EC"/>
</dbReference>
<dbReference type="GO" id="GO:0042800">
    <property type="term" value="F:histone H3K4 methyltransferase activity"/>
    <property type="evidence" value="ECO:0000250"/>
    <property type="project" value="UniProtKB"/>
</dbReference>
<dbReference type="GO" id="GO:0140999">
    <property type="term" value="F:histone H3K4 trimethyltransferase activity"/>
    <property type="evidence" value="ECO:0007669"/>
    <property type="project" value="UniProtKB-EC"/>
</dbReference>
<dbReference type="GO" id="GO:0140949">
    <property type="term" value="F:histone H3K9 trimethyltransferase activity"/>
    <property type="evidence" value="ECO:0007669"/>
    <property type="project" value="UniProtKB-EC"/>
</dbReference>
<dbReference type="GO" id="GO:0140944">
    <property type="term" value="F:histone H4K20 monomethyltransferase activity"/>
    <property type="evidence" value="ECO:0007669"/>
    <property type="project" value="UniProtKB-EC"/>
</dbReference>
<dbReference type="GO" id="GO:0140941">
    <property type="term" value="F:histone H4K20me methyltransferase activity"/>
    <property type="evidence" value="ECO:0007669"/>
    <property type="project" value="UniProtKB-EC"/>
</dbReference>
<dbReference type="GO" id="GO:0042803">
    <property type="term" value="F:protein homodimerization activity"/>
    <property type="evidence" value="ECO:0000250"/>
    <property type="project" value="UniProtKB"/>
</dbReference>
<dbReference type="GO" id="GO:0010844">
    <property type="term" value="F:recombination hotspot binding"/>
    <property type="evidence" value="ECO:0000250"/>
    <property type="project" value="UniProtKB"/>
</dbReference>
<dbReference type="GO" id="GO:0043565">
    <property type="term" value="F:sequence-specific DNA binding"/>
    <property type="evidence" value="ECO:0000266"/>
    <property type="project" value="RGD"/>
</dbReference>
<dbReference type="GO" id="GO:0000976">
    <property type="term" value="F:transcription cis-regulatory region binding"/>
    <property type="evidence" value="ECO:0000250"/>
    <property type="project" value="UniProtKB"/>
</dbReference>
<dbReference type="GO" id="GO:0008270">
    <property type="term" value="F:zinc ion binding"/>
    <property type="evidence" value="ECO:0007669"/>
    <property type="project" value="UniProtKB-KW"/>
</dbReference>
<dbReference type="GO" id="GO:1990918">
    <property type="term" value="P:double-strand break repair involved in meiotic recombination"/>
    <property type="evidence" value="ECO:0000250"/>
    <property type="project" value="UniProtKB"/>
</dbReference>
<dbReference type="GO" id="GO:0007292">
    <property type="term" value="P:female gamete generation"/>
    <property type="evidence" value="ECO:0000250"/>
    <property type="project" value="UniProtKB"/>
</dbReference>
<dbReference type="GO" id="GO:0007129">
    <property type="term" value="P:homologous chromosome pairing at meiosis"/>
    <property type="evidence" value="ECO:0000250"/>
    <property type="project" value="UniProtKB"/>
</dbReference>
<dbReference type="GO" id="GO:0048232">
    <property type="term" value="P:male gamete generation"/>
    <property type="evidence" value="ECO:0000250"/>
    <property type="project" value="UniProtKB"/>
</dbReference>
<dbReference type="GO" id="GO:0007127">
    <property type="term" value="P:meiosis I"/>
    <property type="evidence" value="ECO:0000266"/>
    <property type="project" value="RGD"/>
</dbReference>
<dbReference type="GO" id="GO:0006311">
    <property type="term" value="P:meiotic gene conversion"/>
    <property type="evidence" value="ECO:0000266"/>
    <property type="project" value="RGD"/>
</dbReference>
<dbReference type="GO" id="GO:0032259">
    <property type="term" value="P:methylation"/>
    <property type="evidence" value="ECO:0007669"/>
    <property type="project" value="UniProtKB-KW"/>
</dbReference>
<dbReference type="GO" id="GO:0043066">
    <property type="term" value="P:negative regulation of apoptotic process"/>
    <property type="evidence" value="ECO:0000250"/>
    <property type="project" value="UniProtKB"/>
</dbReference>
<dbReference type="GO" id="GO:1905516">
    <property type="term" value="P:positive regulation of fertilization"/>
    <property type="evidence" value="ECO:0000250"/>
    <property type="project" value="UniProtKB"/>
</dbReference>
<dbReference type="GO" id="GO:0060903">
    <property type="term" value="P:positive regulation of meiosis I"/>
    <property type="evidence" value="ECO:0000266"/>
    <property type="project" value="RGD"/>
</dbReference>
<dbReference type="GO" id="GO:0010845">
    <property type="term" value="P:positive regulation of reciprocal meiotic recombination"/>
    <property type="evidence" value="ECO:0000266"/>
    <property type="project" value="RGD"/>
</dbReference>
<dbReference type="GO" id="GO:0045944">
    <property type="term" value="P:positive regulation of transcription by RNA polymerase II"/>
    <property type="evidence" value="ECO:0000266"/>
    <property type="project" value="RGD"/>
</dbReference>
<dbReference type="GO" id="GO:0010468">
    <property type="term" value="P:regulation of gene expression"/>
    <property type="evidence" value="ECO:0000318"/>
    <property type="project" value="GO_Central"/>
</dbReference>
<dbReference type="GO" id="GO:0007283">
    <property type="term" value="P:spermatogenesis"/>
    <property type="evidence" value="ECO:0000266"/>
    <property type="project" value="RGD"/>
</dbReference>
<dbReference type="CDD" id="cd07765">
    <property type="entry name" value="KRAB_A-box"/>
    <property type="match status" value="1"/>
</dbReference>
<dbReference type="CDD" id="cd19193">
    <property type="entry name" value="PR-SET_PRDM7_9"/>
    <property type="match status" value="1"/>
</dbReference>
<dbReference type="FunFam" id="3.30.160.60:FF:000601">
    <property type="entry name" value="Histone-lysine N-methyltransferase PRDM9"/>
    <property type="match status" value="8"/>
</dbReference>
<dbReference type="FunFam" id="3.30.160.60:FF:001312">
    <property type="entry name" value="Histone-lysine N-methyltransferase PRDM9"/>
    <property type="match status" value="1"/>
</dbReference>
<dbReference type="FunFam" id="2.170.270.10:FF:000031">
    <property type="entry name" value="probable histone-lysine N-methyltransferase PRDM7"/>
    <property type="match status" value="1"/>
</dbReference>
<dbReference type="FunFam" id="3.30.160.60:FF:002343">
    <property type="entry name" value="Zinc finger protein 33A"/>
    <property type="match status" value="1"/>
</dbReference>
<dbReference type="FunFam" id="3.30.160.60:FF:001498">
    <property type="entry name" value="Zinc finger protein 404"/>
    <property type="match status" value="1"/>
</dbReference>
<dbReference type="Gene3D" id="6.10.140.140">
    <property type="match status" value="1"/>
</dbReference>
<dbReference type="Gene3D" id="3.30.160.60">
    <property type="entry name" value="Classic Zinc Finger"/>
    <property type="match status" value="11"/>
</dbReference>
<dbReference type="Gene3D" id="2.170.270.10">
    <property type="entry name" value="SET domain"/>
    <property type="match status" value="1"/>
</dbReference>
<dbReference type="InterPro" id="IPR003655">
    <property type="entry name" value="aKRAB"/>
</dbReference>
<dbReference type="InterPro" id="IPR001909">
    <property type="entry name" value="KRAB"/>
</dbReference>
<dbReference type="InterPro" id="IPR036051">
    <property type="entry name" value="KRAB_dom_sf"/>
</dbReference>
<dbReference type="InterPro" id="IPR048414">
    <property type="entry name" value="PDRM9-like_Znf-C2H2"/>
</dbReference>
<dbReference type="InterPro" id="IPR044417">
    <property type="entry name" value="PRDM7_9_PR-SET"/>
</dbReference>
<dbReference type="InterPro" id="IPR001214">
    <property type="entry name" value="SET_dom"/>
</dbReference>
<dbReference type="InterPro" id="IPR046341">
    <property type="entry name" value="SET_dom_sf"/>
</dbReference>
<dbReference type="InterPro" id="IPR019041">
    <property type="entry name" value="SSXRD_motif"/>
</dbReference>
<dbReference type="InterPro" id="IPR036236">
    <property type="entry name" value="Znf_C2H2_sf"/>
</dbReference>
<dbReference type="InterPro" id="IPR013087">
    <property type="entry name" value="Znf_C2H2_type"/>
</dbReference>
<dbReference type="PANTHER" id="PTHR14003">
    <property type="entry name" value="TRANSCRIPTIONAL REPRESSOR PROTEIN YY"/>
    <property type="match status" value="1"/>
</dbReference>
<dbReference type="PANTHER" id="PTHR14003:SF23">
    <property type="entry name" value="ZINC FINGER PROTEIN 143"/>
    <property type="match status" value="1"/>
</dbReference>
<dbReference type="Pfam" id="PF01352">
    <property type="entry name" value="KRAB"/>
    <property type="match status" value="1"/>
</dbReference>
<dbReference type="Pfam" id="PF21549">
    <property type="entry name" value="PRDM2_PR"/>
    <property type="match status" value="1"/>
</dbReference>
<dbReference type="Pfam" id="PF09514">
    <property type="entry name" value="SSXRD"/>
    <property type="match status" value="1"/>
</dbReference>
<dbReference type="Pfam" id="PF00096">
    <property type="entry name" value="zf-C2H2"/>
    <property type="match status" value="9"/>
</dbReference>
<dbReference type="Pfam" id="PF21225">
    <property type="entry name" value="zf-C2H2_5"/>
    <property type="match status" value="1"/>
</dbReference>
<dbReference type="SMART" id="SM00349">
    <property type="entry name" value="KRAB"/>
    <property type="match status" value="1"/>
</dbReference>
<dbReference type="SMART" id="SM00317">
    <property type="entry name" value="SET"/>
    <property type="match status" value="1"/>
</dbReference>
<dbReference type="SMART" id="SM00355">
    <property type="entry name" value="ZnF_C2H2"/>
    <property type="match status" value="11"/>
</dbReference>
<dbReference type="SUPFAM" id="SSF57667">
    <property type="entry name" value="beta-beta-alpha zinc fingers"/>
    <property type="match status" value="5"/>
</dbReference>
<dbReference type="SUPFAM" id="SSF109640">
    <property type="entry name" value="KRAB domain (Kruppel-associated box)"/>
    <property type="match status" value="1"/>
</dbReference>
<dbReference type="SUPFAM" id="SSF82199">
    <property type="entry name" value="SET domain"/>
    <property type="match status" value="1"/>
</dbReference>
<dbReference type="PROSITE" id="PS50806">
    <property type="entry name" value="KRAB_RELATED"/>
    <property type="match status" value="1"/>
</dbReference>
<dbReference type="PROSITE" id="PS50280">
    <property type="entry name" value="SET"/>
    <property type="match status" value="1"/>
</dbReference>
<dbReference type="PROSITE" id="PS00028">
    <property type="entry name" value="ZINC_FINGER_C2H2_1"/>
    <property type="match status" value="10"/>
</dbReference>
<dbReference type="PROSITE" id="PS50157">
    <property type="entry name" value="ZINC_FINGER_C2H2_2"/>
    <property type="match status" value="10"/>
</dbReference>
<keyword id="KW-0010">Activator</keyword>
<keyword id="KW-0025">Alternative splicing</keyword>
<keyword id="KW-0156">Chromatin regulator</keyword>
<keyword id="KW-0158">Chromosome</keyword>
<keyword id="KW-0238">DNA-binding</keyword>
<keyword id="KW-0469">Meiosis</keyword>
<keyword id="KW-0479">Metal-binding</keyword>
<keyword id="KW-0488">Methylation</keyword>
<keyword id="KW-0489">Methyltransferase</keyword>
<keyword id="KW-0539">Nucleus</keyword>
<keyword id="KW-1185">Reference proteome</keyword>
<keyword id="KW-0677">Repeat</keyword>
<keyword id="KW-0949">S-adenosyl-L-methionine</keyword>
<keyword id="KW-0804">Transcription</keyword>
<keyword id="KW-0805">Transcription regulation</keyword>
<keyword id="KW-0808">Transferase</keyword>
<keyword id="KW-0862">Zinc</keyword>
<keyword id="KW-0863">Zinc-finger</keyword>
<name>PRDM9_RAT</name>
<sequence length="796" mass="92579">MSRTMNTNKPEENSTEGDAGKLEWKPKVKDEFKDISIYFSKEEWAEMGEWEKIRYRNVKRNYKMLISIGLRAPRPAFMCYQRQAIKPQINDNEDSDEEWTPKQQVSSPWVPFRVKHSKQQKETPRMPLSDKSSVKEVFGIENLLNTSGSEHAQKPVCSPEEGNTSGQHFGKKLKLRRKNVEVNRYRLRERKDLAYEEVSEPQDDDYLYCEKCQNFFIDSCPNHGPPVFVKDSVVDRGHPNHSVLSLPPGLRIGPSGIPEAGLGVWNEASDLPVGLHFGPYKGQITEDEEAANSGYSWLITKGRNCYEYVDGQDESQANWMRYVNCARDDEEQNLVAFQYHRKIFYRTCRVIRPGRELLVWYGDEYGQELGIKWGSKMKKGFTAGRELRTEIHPCFLCSLAFSSQKFLTQHVEWNHRTEIFPGASARINPKPGDPCPDQLQEHFDSQNKNDKASNEVKRKSKPRHKWTRQRISTAFSSTLKEQMRSEESKRTVEEELRTGQTTNIEDTAKSFIASETSRIERQCGQCFSDKSNVSEHQRTHTGEKPYICRECGRGFSQKSDLIKHQRTHTEEKPYICRECGRGFTQKSDLIKHQRTHTEEKPYICRECGRGFTQKSDLIKHQRTHTGEKPYICRECGRGFTQKSDLIKHQRTHTEEKPYICRECGRGFTQKSSLIRHQRTHTGEKPYICRECGLGFTQKSNLIRHLRTHTGEKPYICRECGLGFTRKSNLIQHQRTHTGEKPYICRECGQGLTWKSSLIQHQRTHTGEKPYICRECGRGFTWKSSLIQHQRTHTVEK</sequence>
<proteinExistence type="inferred from homology"/>